<protein>
    <recommendedName>
        <fullName evidence="1">Large ribosomal subunit protein uL18</fullName>
    </recommendedName>
    <alternativeName>
        <fullName evidence="2">50S ribosomal protein L18</fullName>
    </alternativeName>
</protein>
<comment type="function">
    <text evidence="1">This is one of the proteins that bind and probably mediate the attachment of the 5S RNA into the large ribosomal subunit, where it forms part of the central protuberance.</text>
</comment>
<comment type="subunit">
    <text evidence="1">Part of the 50S ribosomal subunit. Contacts the 5S and 23S rRNAs.</text>
</comment>
<comment type="similarity">
    <text evidence="1">Belongs to the universal ribosomal protein uL18 family.</text>
</comment>
<name>RL18_SACI4</name>
<evidence type="ECO:0000255" key="1">
    <source>
        <dbReference type="HAMAP-Rule" id="MF_01337"/>
    </source>
</evidence>
<evidence type="ECO:0000305" key="2"/>
<reference key="1">
    <citation type="journal article" date="2009" name="Proc. Natl. Acad. Sci. U.S.A.">
        <title>Biogeography of the Sulfolobus islandicus pan-genome.</title>
        <authorList>
            <person name="Reno M.L."/>
            <person name="Held N.L."/>
            <person name="Fields C.J."/>
            <person name="Burke P.V."/>
            <person name="Whitaker R.J."/>
        </authorList>
    </citation>
    <scope>NUCLEOTIDE SEQUENCE [LARGE SCALE GENOMIC DNA]</scope>
    <source>
        <strain>M.14.25 / Kamchatka #1</strain>
    </source>
</reference>
<proteinExistence type="inferred from homology"/>
<accession>C3MVJ7</accession>
<organism>
    <name type="scientific">Saccharolobus islandicus (strain M.14.25 / Kamchatka #1)</name>
    <name type="common">Sulfolobus islandicus</name>
    <dbReference type="NCBI Taxonomy" id="427317"/>
    <lineage>
        <taxon>Archaea</taxon>
        <taxon>Thermoproteota</taxon>
        <taxon>Thermoprotei</taxon>
        <taxon>Sulfolobales</taxon>
        <taxon>Sulfolobaceae</taxon>
        <taxon>Saccharolobus</taxon>
    </lineage>
</organism>
<dbReference type="EMBL" id="CP001400">
    <property type="protein sequence ID" value="ACP38192.1"/>
    <property type="molecule type" value="Genomic_DNA"/>
</dbReference>
<dbReference type="RefSeq" id="WP_012711437.1">
    <property type="nucleotide sequence ID" value="NC_012588.1"/>
</dbReference>
<dbReference type="SMR" id="C3MVJ7"/>
<dbReference type="KEGG" id="sia:M1425_1439"/>
<dbReference type="HOGENOM" id="CLU_056222_2_0_2"/>
<dbReference type="Proteomes" id="UP000001350">
    <property type="component" value="Chromosome"/>
</dbReference>
<dbReference type="GO" id="GO:0022625">
    <property type="term" value="C:cytosolic large ribosomal subunit"/>
    <property type="evidence" value="ECO:0007669"/>
    <property type="project" value="TreeGrafter"/>
</dbReference>
<dbReference type="GO" id="GO:0008097">
    <property type="term" value="F:5S rRNA binding"/>
    <property type="evidence" value="ECO:0007669"/>
    <property type="project" value="InterPro"/>
</dbReference>
<dbReference type="GO" id="GO:0003735">
    <property type="term" value="F:structural constituent of ribosome"/>
    <property type="evidence" value="ECO:0007669"/>
    <property type="project" value="InterPro"/>
</dbReference>
<dbReference type="GO" id="GO:0000027">
    <property type="term" value="P:ribosomal large subunit assembly"/>
    <property type="evidence" value="ECO:0007669"/>
    <property type="project" value="TreeGrafter"/>
</dbReference>
<dbReference type="GO" id="GO:0006412">
    <property type="term" value="P:translation"/>
    <property type="evidence" value="ECO:0007669"/>
    <property type="project" value="UniProtKB-UniRule"/>
</dbReference>
<dbReference type="CDD" id="cd00432">
    <property type="entry name" value="Ribosomal_L18_L5e"/>
    <property type="match status" value="1"/>
</dbReference>
<dbReference type="FunFam" id="3.30.420.100:FF:000008">
    <property type="entry name" value="50S ribosomal protein L18"/>
    <property type="match status" value="1"/>
</dbReference>
<dbReference type="Gene3D" id="3.30.420.100">
    <property type="match status" value="1"/>
</dbReference>
<dbReference type="HAMAP" id="MF_01337_A">
    <property type="entry name" value="Ribosomal_uL18_A"/>
    <property type="match status" value="1"/>
</dbReference>
<dbReference type="InterPro" id="IPR005485">
    <property type="entry name" value="Rbsml_uL18_euk"/>
</dbReference>
<dbReference type="NCBIfam" id="NF006342">
    <property type="entry name" value="PRK08569.1"/>
    <property type="match status" value="1"/>
</dbReference>
<dbReference type="PANTHER" id="PTHR23410:SF12">
    <property type="entry name" value="LARGE RIBOSOMAL SUBUNIT PROTEIN UL18"/>
    <property type="match status" value="1"/>
</dbReference>
<dbReference type="PANTHER" id="PTHR23410">
    <property type="entry name" value="RIBOSOMAL PROTEIN L5-RELATED"/>
    <property type="match status" value="1"/>
</dbReference>
<dbReference type="Pfam" id="PF17144">
    <property type="entry name" value="Ribosomal_L5e"/>
    <property type="match status" value="2"/>
</dbReference>
<dbReference type="SUPFAM" id="SSF53137">
    <property type="entry name" value="Translational machinery components"/>
    <property type="match status" value="1"/>
</dbReference>
<sequence>MANGPNYKIKPRRRREGKTNYYKRYVYVISKQIRFIVRITNKYVIVQIAKIDPKGDIMVASAHSSELTKKFEWKGDENNTPSAYLTGYLAALRAVKKGVTECVADIGLHVPSKGNKVFYAIKGAIDAGLKIPIGDISIENDRIKGEHIAKYAEKLKSENLDLYNKLFSRYLGRGLNPENLPSHFEEILNKIKSSGG</sequence>
<feature type="chain" id="PRO_1000214687" description="Large ribosomal subunit protein uL18">
    <location>
        <begin position="1"/>
        <end position="196"/>
    </location>
</feature>
<gene>
    <name evidence="1" type="primary">rpl18</name>
    <name type="ordered locus">M1425_1439</name>
</gene>
<keyword id="KW-0687">Ribonucleoprotein</keyword>
<keyword id="KW-0689">Ribosomal protein</keyword>
<keyword id="KW-0694">RNA-binding</keyword>
<keyword id="KW-0699">rRNA-binding</keyword>